<keyword id="KW-1185">Reference proteome</keyword>
<keyword id="KW-0687">Ribonucleoprotein</keyword>
<keyword id="KW-0689">Ribosomal protein</keyword>
<reference key="1">
    <citation type="submission" date="2006-08" db="EMBL/GenBank/DDBJ databases">
        <title>Complete sequence of Shewanella frigidimarina NCIMB 400.</title>
        <authorList>
            <consortium name="US DOE Joint Genome Institute"/>
            <person name="Copeland A."/>
            <person name="Lucas S."/>
            <person name="Lapidus A."/>
            <person name="Barry K."/>
            <person name="Detter J.C."/>
            <person name="Glavina del Rio T."/>
            <person name="Hammon N."/>
            <person name="Israni S."/>
            <person name="Dalin E."/>
            <person name="Tice H."/>
            <person name="Pitluck S."/>
            <person name="Fredrickson J.K."/>
            <person name="Kolker E."/>
            <person name="McCuel L.A."/>
            <person name="DiChristina T."/>
            <person name="Nealson K.H."/>
            <person name="Newman D."/>
            <person name="Tiedje J.M."/>
            <person name="Zhou J."/>
            <person name="Romine M.F."/>
            <person name="Culley D.E."/>
            <person name="Serres M."/>
            <person name="Chertkov O."/>
            <person name="Brettin T."/>
            <person name="Bruce D."/>
            <person name="Han C."/>
            <person name="Tapia R."/>
            <person name="Gilna P."/>
            <person name="Schmutz J."/>
            <person name="Larimer F."/>
            <person name="Land M."/>
            <person name="Hauser L."/>
            <person name="Kyrpides N."/>
            <person name="Mikhailova N."/>
            <person name="Richardson P."/>
        </authorList>
    </citation>
    <scope>NUCLEOTIDE SEQUENCE [LARGE SCALE GENOMIC DNA]</scope>
    <source>
        <strain>NCIMB 400</strain>
    </source>
</reference>
<name>RL7_SHEFN</name>
<dbReference type="EMBL" id="CP000447">
    <property type="protein sequence ID" value="ABI70003.1"/>
    <property type="molecule type" value="Genomic_DNA"/>
</dbReference>
<dbReference type="RefSeq" id="WP_011635632.1">
    <property type="nucleotide sequence ID" value="NC_008345.1"/>
</dbReference>
<dbReference type="SMR" id="Q089R2"/>
<dbReference type="STRING" id="318167.Sfri_0140"/>
<dbReference type="KEGG" id="sfr:Sfri_0140"/>
<dbReference type="eggNOG" id="COG0222">
    <property type="taxonomic scope" value="Bacteria"/>
</dbReference>
<dbReference type="HOGENOM" id="CLU_086499_3_2_6"/>
<dbReference type="OrthoDB" id="9811748at2"/>
<dbReference type="Proteomes" id="UP000000684">
    <property type="component" value="Chromosome"/>
</dbReference>
<dbReference type="GO" id="GO:0022625">
    <property type="term" value="C:cytosolic large ribosomal subunit"/>
    <property type="evidence" value="ECO:0007669"/>
    <property type="project" value="TreeGrafter"/>
</dbReference>
<dbReference type="GO" id="GO:0003729">
    <property type="term" value="F:mRNA binding"/>
    <property type="evidence" value="ECO:0007669"/>
    <property type="project" value="TreeGrafter"/>
</dbReference>
<dbReference type="GO" id="GO:0003735">
    <property type="term" value="F:structural constituent of ribosome"/>
    <property type="evidence" value="ECO:0007669"/>
    <property type="project" value="InterPro"/>
</dbReference>
<dbReference type="GO" id="GO:0006412">
    <property type="term" value="P:translation"/>
    <property type="evidence" value="ECO:0007669"/>
    <property type="project" value="UniProtKB-UniRule"/>
</dbReference>
<dbReference type="CDD" id="cd00387">
    <property type="entry name" value="Ribosomal_L7_L12"/>
    <property type="match status" value="1"/>
</dbReference>
<dbReference type="FunFam" id="1.20.5.710:FF:000001">
    <property type="entry name" value="50S ribosomal protein L7/L12"/>
    <property type="match status" value="1"/>
</dbReference>
<dbReference type="FunFam" id="3.30.1390.10:FF:000001">
    <property type="entry name" value="50S ribosomal protein L7/L12"/>
    <property type="match status" value="1"/>
</dbReference>
<dbReference type="Gene3D" id="3.30.1390.10">
    <property type="match status" value="1"/>
</dbReference>
<dbReference type="Gene3D" id="1.20.5.710">
    <property type="entry name" value="Single helix bin"/>
    <property type="match status" value="1"/>
</dbReference>
<dbReference type="HAMAP" id="MF_00368">
    <property type="entry name" value="Ribosomal_bL12"/>
    <property type="match status" value="1"/>
</dbReference>
<dbReference type="InterPro" id="IPR000206">
    <property type="entry name" value="Ribosomal_bL12"/>
</dbReference>
<dbReference type="InterPro" id="IPR013823">
    <property type="entry name" value="Ribosomal_bL12_C"/>
</dbReference>
<dbReference type="InterPro" id="IPR014719">
    <property type="entry name" value="Ribosomal_bL12_C/ClpS-like"/>
</dbReference>
<dbReference type="InterPro" id="IPR008932">
    <property type="entry name" value="Ribosomal_bL12_oligo"/>
</dbReference>
<dbReference type="InterPro" id="IPR036235">
    <property type="entry name" value="Ribosomal_bL12_oligo_N_sf"/>
</dbReference>
<dbReference type="NCBIfam" id="TIGR00855">
    <property type="entry name" value="L12"/>
    <property type="match status" value="1"/>
</dbReference>
<dbReference type="PANTHER" id="PTHR45987">
    <property type="entry name" value="39S RIBOSOMAL PROTEIN L12"/>
    <property type="match status" value="1"/>
</dbReference>
<dbReference type="PANTHER" id="PTHR45987:SF4">
    <property type="entry name" value="LARGE RIBOSOMAL SUBUNIT PROTEIN BL12M"/>
    <property type="match status" value="1"/>
</dbReference>
<dbReference type="Pfam" id="PF00542">
    <property type="entry name" value="Ribosomal_L12"/>
    <property type="match status" value="1"/>
</dbReference>
<dbReference type="Pfam" id="PF16320">
    <property type="entry name" value="Ribosomal_L12_N"/>
    <property type="match status" value="1"/>
</dbReference>
<dbReference type="SUPFAM" id="SSF54736">
    <property type="entry name" value="ClpS-like"/>
    <property type="match status" value="1"/>
</dbReference>
<dbReference type="SUPFAM" id="SSF48300">
    <property type="entry name" value="Ribosomal protein L7/12, oligomerisation (N-terminal) domain"/>
    <property type="match status" value="1"/>
</dbReference>
<comment type="function">
    <text evidence="1">Forms part of the ribosomal stalk which helps the ribosome interact with GTP-bound translation factors. Is thus essential for accurate translation.</text>
</comment>
<comment type="subunit">
    <text evidence="1">Homodimer. Part of the ribosomal stalk of the 50S ribosomal subunit. Forms a multimeric L10(L12)X complex, where L10 forms an elongated spine to which 2 to 4 L12 dimers bind in a sequential fashion. Binds GTP-bound translation factors.</text>
</comment>
<comment type="similarity">
    <text evidence="1">Belongs to the bacterial ribosomal protein bL12 family.</text>
</comment>
<protein>
    <recommendedName>
        <fullName evidence="1">Large ribosomal subunit protein bL12</fullName>
    </recommendedName>
    <alternativeName>
        <fullName evidence="2">50S ribosomal protein L7/L12</fullName>
    </alternativeName>
</protein>
<accession>Q089R2</accession>
<evidence type="ECO:0000255" key="1">
    <source>
        <dbReference type="HAMAP-Rule" id="MF_00368"/>
    </source>
</evidence>
<evidence type="ECO:0000305" key="2"/>
<gene>
    <name evidence="1" type="primary">rplL</name>
    <name type="ordered locus">Sfri_0140</name>
</gene>
<proteinExistence type="inferred from homology"/>
<sequence>MSITKDQMLEAFAAMSVMEVVELIEAMEEKFGVSAAAAVVSGGGDAVAAEEQTEFDVVLTSFGENKVAVIKALRSATGLGLKEAKTMAESSPIAVKEAVSKEEAATLKADLEAAGASVEVK</sequence>
<organism>
    <name type="scientific">Shewanella frigidimarina (strain NCIMB 400)</name>
    <dbReference type="NCBI Taxonomy" id="318167"/>
    <lineage>
        <taxon>Bacteria</taxon>
        <taxon>Pseudomonadati</taxon>
        <taxon>Pseudomonadota</taxon>
        <taxon>Gammaproteobacteria</taxon>
        <taxon>Alteromonadales</taxon>
        <taxon>Shewanellaceae</taxon>
        <taxon>Shewanella</taxon>
    </lineage>
</organism>
<feature type="chain" id="PRO_1000007083" description="Large ribosomal subunit protein bL12">
    <location>
        <begin position="1"/>
        <end position="121"/>
    </location>
</feature>